<reference key="1">
    <citation type="journal article" date="2001" name="DNA Res.">
        <title>Complete genomic sequence of the filamentous nitrogen-fixing cyanobacterium Anabaena sp. strain PCC 7120.</title>
        <authorList>
            <person name="Kaneko T."/>
            <person name="Nakamura Y."/>
            <person name="Wolk C.P."/>
            <person name="Kuritz T."/>
            <person name="Sasamoto S."/>
            <person name="Watanabe A."/>
            <person name="Iriguchi M."/>
            <person name="Ishikawa A."/>
            <person name="Kawashima K."/>
            <person name="Kimura T."/>
            <person name="Kishida Y."/>
            <person name="Kohara M."/>
            <person name="Matsumoto M."/>
            <person name="Matsuno A."/>
            <person name="Muraki A."/>
            <person name="Nakazaki N."/>
            <person name="Shimpo S."/>
            <person name="Sugimoto M."/>
            <person name="Takazawa M."/>
            <person name="Yamada M."/>
            <person name="Yasuda M."/>
            <person name="Tabata S."/>
        </authorList>
    </citation>
    <scope>NUCLEOTIDE SEQUENCE [LARGE SCALE GENOMIC DNA]</scope>
    <source>
        <strain>PCC 7120 / SAG 25.82 / UTEX 2576</strain>
    </source>
</reference>
<comment type="cofactor">
    <cofactor evidence="1">
        <name>thiamine diphosphate</name>
        <dbReference type="ChEBI" id="CHEBI:58937"/>
    </cofactor>
</comment>
<comment type="similarity">
    <text evidence="1">Belongs to the XFP family.</text>
</comment>
<dbReference type="EC" id="4.1.2.-"/>
<dbReference type="EMBL" id="BA000019">
    <property type="protein sequence ID" value="BAB77849.1"/>
    <property type="molecule type" value="Genomic_DNA"/>
</dbReference>
<dbReference type="PIR" id="AF1991">
    <property type="entry name" value="AF1991"/>
</dbReference>
<dbReference type="RefSeq" id="WP_010995653.1">
    <property type="nucleotide sequence ID" value="NZ_RSCN01000022.1"/>
</dbReference>
<dbReference type="SMR" id="Q8YWW1"/>
<dbReference type="STRING" id="103690.gene:10493497"/>
<dbReference type="KEGG" id="ana:all1483"/>
<dbReference type="eggNOG" id="COG3957">
    <property type="taxonomic scope" value="Bacteria"/>
</dbReference>
<dbReference type="OrthoDB" id="9768449at2"/>
<dbReference type="Proteomes" id="UP000002483">
    <property type="component" value="Chromosome"/>
</dbReference>
<dbReference type="GO" id="GO:0016832">
    <property type="term" value="F:aldehyde-lyase activity"/>
    <property type="evidence" value="ECO:0007669"/>
    <property type="project" value="UniProtKB-UniRule"/>
</dbReference>
<dbReference type="GO" id="GO:0005975">
    <property type="term" value="P:carbohydrate metabolic process"/>
    <property type="evidence" value="ECO:0007669"/>
    <property type="project" value="InterPro"/>
</dbReference>
<dbReference type="CDD" id="cd02011">
    <property type="entry name" value="TPP_PK"/>
    <property type="match status" value="1"/>
</dbReference>
<dbReference type="FunFam" id="3.40.50.970:FF:000011">
    <property type="entry name" value="Pyruvate dehydrogenase E1 component"/>
    <property type="match status" value="1"/>
</dbReference>
<dbReference type="Gene3D" id="3.40.50.920">
    <property type="match status" value="1"/>
</dbReference>
<dbReference type="Gene3D" id="3.40.50.970">
    <property type="match status" value="2"/>
</dbReference>
<dbReference type="HAMAP" id="MF_01403">
    <property type="entry name" value="Phosphoketolase"/>
    <property type="match status" value="1"/>
</dbReference>
<dbReference type="InterPro" id="IPR023962">
    <property type="entry name" value="Phosphoketolase"/>
</dbReference>
<dbReference type="InterPro" id="IPR029061">
    <property type="entry name" value="THDP-binding"/>
</dbReference>
<dbReference type="InterPro" id="IPR009014">
    <property type="entry name" value="Transketo_C/PFOR_II"/>
</dbReference>
<dbReference type="InterPro" id="IPR005593">
    <property type="entry name" value="Xul5P/Fru6P_PKetolase"/>
</dbReference>
<dbReference type="InterPro" id="IPR018969">
    <property type="entry name" value="Xul5P/Fru6P_PKetolase_C"/>
</dbReference>
<dbReference type="InterPro" id="IPR019790">
    <property type="entry name" value="Xul5P/Fru6P_PKetolase_CS"/>
</dbReference>
<dbReference type="InterPro" id="IPR018970">
    <property type="entry name" value="Xul5P/Fru6P_PKetolase_N"/>
</dbReference>
<dbReference type="InterPro" id="IPR019789">
    <property type="entry name" value="Xul5P/Fru6P_PKetolase_ThDP_BS"/>
</dbReference>
<dbReference type="NCBIfam" id="NF003617">
    <property type="entry name" value="PRK05261.1-2"/>
    <property type="match status" value="1"/>
</dbReference>
<dbReference type="NCBIfam" id="NF003619">
    <property type="entry name" value="PRK05261.1-4"/>
    <property type="match status" value="1"/>
</dbReference>
<dbReference type="PANTHER" id="PTHR31273">
    <property type="entry name" value="PHOSPHOKETOLASE-RELATED"/>
    <property type="match status" value="1"/>
</dbReference>
<dbReference type="PANTHER" id="PTHR31273:SF0">
    <property type="entry name" value="PHOSPHOKETOLASE-RELATED"/>
    <property type="match status" value="1"/>
</dbReference>
<dbReference type="Pfam" id="PF03894">
    <property type="entry name" value="XFP"/>
    <property type="match status" value="1"/>
</dbReference>
<dbReference type="Pfam" id="PF09363">
    <property type="entry name" value="XFP_C"/>
    <property type="match status" value="1"/>
</dbReference>
<dbReference type="Pfam" id="PF09364">
    <property type="entry name" value="XFP_N"/>
    <property type="match status" value="1"/>
</dbReference>
<dbReference type="PIRSF" id="PIRSF017245">
    <property type="entry name" value="Phosphoketolase"/>
    <property type="match status" value="1"/>
</dbReference>
<dbReference type="SUPFAM" id="SSF52518">
    <property type="entry name" value="Thiamin diphosphate-binding fold (THDP-binding)"/>
    <property type="match status" value="2"/>
</dbReference>
<dbReference type="PROSITE" id="PS60002">
    <property type="entry name" value="PHOSPHOKETOLASE_1"/>
    <property type="match status" value="1"/>
</dbReference>
<dbReference type="PROSITE" id="PS60003">
    <property type="entry name" value="PHOSPHOKETOLASE_2"/>
    <property type="match status" value="1"/>
</dbReference>
<keyword id="KW-0456">Lyase</keyword>
<keyword id="KW-1185">Reference proteome</keyword>
<keyword id="KW-0786">Thiamine pyrophosphate</keyword>
<organism>
    <name type="scientific">Nostoc sp. (strain PCC 7120 / SAG 25.82 / UTEX 2576)</name>
    <dbReference type="NCBI Taxonomy" id="103690"/>
    <lineage>
        <taxon>Bacteria</taxon>
        <taxon>Bacillati</taxon>
        <taxon>Cyanobacteriota</taxon>
        <taxon>Cyanophyceae</taxon>
        <taxon>Nostocales</taxon>
        <taxon>Nostocaceae</taxon>
        <taxon>Nostoc</taxon>
    </lineage>
</organism>
<accession>Q8YWW1</accession>
<evidence type="ECO:0000305" key="1"/>
<protein>
    <recommendedName>
        <fullName>Probable phosphoketolase 1</fullName>
        <ecNumber>4.1.2.-</ecNumber>
    </recommendedName>
</protein>
<sequence length="808" mass="91069">MTISPSKPKSSDVKQDKSAPLSTEELYQINAYWRACNYLALGMIYLQDNPLLKQPLKPGHIKNRLLGHWGSSPGLSFIYVHLNRLIKKYDLDVIYIAGPGHGAPGILGPTYLEGTYSEVYPDKSEDEEGMLKFFKQFSFPGGIGSHCTPETPGSIHEGGELGYSLSHAYGAAFDNPDLIVTAVIGDGEAETGPLATAWHSNKFINPIRDGAVLPILHLNGYKIANPTILARISHEELEDLFKGYGYTPYFVEGHDPAQVHQLMAATLETVILEIKKIQTEARTSGVAKRPRWPMIVLRTPKGWTAPAEIDGHKLEGFWRSHQVPITDVATNPDHLKILEQWMKSYKPEELFDEHGSLIPELKELAPIGHRRISANPVANGGILRKELRLSDFRNNAVEVSKPGAVEVENTKPLGNFLRDIMRNNMTNFRIFGPDETASNRLSAVYEVSEKTWLADILPEDADGSELSTDGRVMEMLSEHNLFGWLEGYLLSGRHGLFHSYEAFAHIVDSMFNQHAKWLEISKNEVAWRSPISSENILLSSTVWRQDNNGFSHQDPGFIDLVTNKSANVTRIYLPPDANCLLSVADHCLRSTNYVNVIVADKQKHLQFLSIEEAIAHCTKGIGIWDWASNDHHGQEPDLPDVIMASCGDVVTMEALAATAILRDEFPDLKVRFINVVDLYKLQPDTEHPHGLSDWDFDSLFTTDKPVIFNFHGYPWLIHKLAYRRTNHENIHVRGYKEKGSINTPLELAINNQVDRFNLVIDVIDRVPKLGSAAVYVRERMKKEIINNRNYAHKHGIDQPEILNWKWPY</sequence>
<feature type="chain" id="PRO_0000193869" description="Probable phosphoketolase 1">
    <location>
        <begin position="1"/>
        <end position="808"/>
    </location>
</feature>
<gene>
    <name type="ordered locus">all1483</name>
</gene>
<name>PHK1_NOSS1</name>
<proteinExistence type="inferred from homology"/>